<feature type="chain" id="PRO_0000342279" description="Tuftelin-interacting protein 11">
    <location>
        <begin position="1"/>
        <end position="827"/>
    </location>
</feature>
<feature type="domain" description="G-patch" evidence="2">
    <location>
        <begin position="145"/>
        <end position="191"/>
    </location>
</feature>
<feature type="region of interest" description="Disordered" evidence="3">
    <location>
        <begin position="31"/>
        <end position="129"/>
    </location>
</feature>
<feature type="region of interest" description="Disordered" evidence="3">
    <location>
        <begin position="179"/>
        <end position="203"/>
    </location>
</feature>
<feature type="compositionally biased region" description="Basic and acidic residues" evidence="3">
    <location>
        <begin position="41"/>
        <end position="60"/>
    </location>
</feature>
<feature type="compositionally biased region" description="Acidic residues" evidence="3">
    <location>
        <begin position="88"/>
        <end position="98"/>
    </location>
</feature>
<feature type="compositionally biased region" description="Basic and acidic residues" evidence="3">
    <location>
        <begin position="99"/>
        <end position="112"/>
    </location>
</feature>
<name>TFP11_CHICK</name>
<accession>Q5ZII9</accession>
<proteinExistence type="evidence at transcript level"/>
<keyword id="KW-0507">mRNA processing</keyword>
<keyword id="KW-0508">mRNA splicing</keyword>
<keyword id="KW-0539">Nucleus</keyword>
<keyword id="KW-1185">Reference proteome</keyword>
<keyword id="KW-0747">Spliceosome</keyword>
<gene>
    <name type="primary">TFIP11</name>
    <name type="synonym">STIP</name>
    <name type="ORF">RCJMB04_25m16</name>
</gene>
<evidence type="ECO:0000250" key="1"/>
<evidence type="ECO:0000255" key="2">
    <source>
        <dbReference type="PROSITE-ProRule" id="PRU00092"/>
    </source>
</evidence>
<evidence type="ECO:0000256" key="3">
    <source>
        <dbReference type="SAM" id="MobiDB-lite"/>
    </source>
</evidence>
<evidence type="ECO:0000305" key="4"/>
<dbReference type="EMBL" id="AJ720795">
    <property type="protein sequence ID" value="CAG32454.1"/>
    <property type="molecule type" value="mRNA"/>
</dbReference>
<dbReference type="RefSeq" id="NP_001025836.1">
    <property type="nucleotide sequence ID" value="NM_001030665.3"/>
</dbReference>
<dbReference type="SMR" id="Q5ZII9"/>
<dbReference type="FunCoup" id="Q5ZII9">
    <property type="interactions" value="2595"/>
</dbReference>
<dbReference type="STRING" id="9031.ENSGALP00000009008"/>
<dbReference type="PaxDb" id="9031-ENSGALP00000009008"/>
<dbReference type="Ensembl" id="ENSGALT00010057409.1">
    <property type="protein sequence ID" value="ENSGALP00010034885.1"/>
    <property type="gene ID" value="ENSGALG00010023585.1"/>
</dbReference>
<dbReference type="GeneID" id="416909"/>
<dbReference type="KEGG" id="gga:416909"/>
<dbReference type="CTD" id="24144"/>
<dbReference type="VEuPathDB" id="HostDB:geneid_416909"/>
<dbReference type="eggNOG" id="KOG2184">
    <property type="taxonomic scope" value="Eukaryota"/>
</dbReference>
<dbReference type="GeneTree" id="ENSGT00390000012739"/>
<dbReference type="HOGENOM" id="CLU_007977_1_1_1"/>
<dbReference type="InParanoid" id="Q5ZII9"/>
<dbReference type="OMA" id="CEQDIIQ"/>
<dbReference type="OrthoDB" id="4822at2759"/>
<dbReference type="PhylomeDB" id="Q5ZII9"/>
<dbReference type="TreeFam" id="TF314887"/>
<dbReference type="PRO" id="PR:Q5ZII9"/>
<dbReference type="Proteomes" id="UP000000539">
    <property type="component" value="Chromosome 15"/>
</dbReference>
<dbReference type="Bgee" id="ENSGALG00000005623">
    <property type="expression patterns" value="Expressed in spermatid and 13 other cell types or tissues"/>
</dbReference>
<dbReference type="GO" id="GO:0071013">
    <property type="term" value="C:catalytic step 2 spliceosome"/>
    <property type="evidence" value="ECO:0007669"/>
    <property type="project" value="Ensembl"/>
</dbReference>
<dbReference type="GO" id="GO:0000781">
    <property type="term" value="C:chromosome, telomeric region"/>
    <property type="evidence" value="ECO:0007669"/>
    <property type="project" value="Ensembl"/>
</dbReference>
<dbReference type="GO" id="GO:0031012">
    <property type="term" value="C:extracellular matrix"/>
    <property type="evidence" value="ECO:0007669"/>
    <property type="project" value="Ensembl"/>
</dbReference>
<dbReference type="GO" id="GO:0016607">
    <property type="term" value="C:nuclear speck"/>
    <property type="evidence" value="ECO:0007669"/>
    <property type="project" value="Ensembl"/>
</dbReference>
<dbReference type="GO" id="GO:0005730">
    <property type="term" value="C:nucleolus"/>
    <property type="evidence" value="ECO:0007669"/>
    <property type="project" value="Ensembl"/>
</dbReference>
<dbReference type="GO" id="GO:0005681">
    <property type="term" value="C:spliceosomal complex"/>
    <property type="evidence" value="ECO:0000250"/>
    <property type="project" value="UniProtKB"/>
</dbReference>
<dbReference type="GO" id="GO:0071008">
    <property type="term" value="C:U2-type post-mRNA release spliceosomal complex"/>
    <property type="evidence" value="ECO:0000318"/>
    <property type="project" value="GO_Central"/>
</dbReference>
<dbReference type="GO" id="GO:0003676">
    <property type="term" value="F:nucleic acid binding"/>
    <property type="evidence" value="ECO:0007669"/>
    <property type="project" value="InterPro"/>
</dbReference>
<dbReference type="GO" id="GO:0031333">
    <property type="term" value="P:negative regulation of protein-containing complex assembly"/>
    <property type="evidence" value="ECO:0007669"/>
    <property type="project" value="Ensembl"/>
</dbReference>
<dbReference type="GO" id="GO:0000390">
    <property type="term" value="P:spliceosomal complex disassembly"/>
    <property type="evidence" value="ECO:0000318"/>
    <property type="project" value="GO_Central"/>
</dbReference>
<dbReference type="InterPro" id="IPR000467">
    <property type="entry name" value="G_patch_dom"/>
</dbReference>
<dbReference type="InterPro" id="IPR022783">
    <property type="entry name" value="GCFC_dom"/>
</dbReference>
<dbReference type="InterPro" id="IPR022159">
    <property type="entry name" value="STIP/TFIP11_N"/>
</dbReference>
<dbReference type="InterPro" id="IPR024933">
    <property type="entry name" value="TFP11"/>
</dbReference>
<dbReference type="InterPro" id="IPR045211">
    <property type="entry name" value="TFP11/STIP/Ntr1"/>
</dbReference>
<dbReference type="PANTHER" id="PTHR23329:SF1">
    <property type="entry name" value="TUFTELIN-INTERACTING PROTEIN 11"/>
    <property type="match status" value="1"/>
</dbReference>
<dbReference type="PANTHER" id="PTHR23329">
    <property type="entry name" value="TUFTELIN-INTERACTING PROTEIN 11-RELATED"/>
    <property type="match status" value="1"/>
</dbReference>
<dbReference type="Pfam" id="PF01585">
    <property type="entry name" value="G-patch"/>
    <property type="match status" value="1"/>
</dbReference>
<dbReference type="Pfam" id="PF07842">
    <property type="entry name" value="GCFC"/>
    <property type="match status" value="1"/>
</dbReference>
<dbReference type="Pfam" id="PF12457">
    <property type="entry name" value="TIP_N"/>
    <property type="match status" value="1"/>
</dbReference>
<dbReference type="PIRSF" id="PIRSF017706">
    <property type="entry name" value="TFIP11"/>
    <property type="match status" value="1"/>
</dbReference>
<dbReference type="SMART" id="SM00443">
    <property type="entry name" value="G_patch"/>
    <property type="match status" value="1"/>
</dbReference>
<dbReference type="PROSITE" id="PS50174">
    <property type="entry name" value="G_PATCH"/>
    <property type="match status" value="1"/>
</dbReference>
<sequence length="827" mass="95575">MSMSHLYGTDGEDGVEMENFEVSDWDLQNEFNPHRHRHRQTKEEATYGVWAERDSDEERPSFGGKRSRDYSAPVNFISAGLKKSAAEDVSDEDSDEDEKPVKQEEIPKEFVPKKLKTGGNFKPSQKGFVGGTKSFMDFGSWERHTKGIGQKLLQKMGYVPGRGLGKNAQGIINPIEAKQRKGKGAVGAYGSERTSQSLQDFPVVDSEEEAEEEFQKELSQWRKDPNGGKKKPKYSYKTVEELKAKGRINKQLSTPQKELSQVKVIDMTGREQKVYYSYSQISHKHNIPDDNPQQLLGKDSKPQGFALPELEHNLQLLIDITEQEIIQSDRQLQYERDMVVNLTHEIQKMSEILSHEETAISNLSKVLDMVEECERRMQPSCENPLTLDECAKIFETLQDKYYEEYRMSDRVDLAVAIVYPLMKDYFKNWDPLKDCTYGTEIIAKWKSLLENDQLLSHGGQDLSTDAFHRLMWEIWMPYVRNIVAQWQPRNCGSMVDFLDSWVHIIPVWILDNILDQLIFPKLQKEVENWNPLTDTVPIHSWIHPWLPLMQARLEPLYSPIRNKLANALQKWHPSDSSAKLILQPWKDVFTPGSWEAFMVKNIVPKLGMCLNELIINPHQQHMDAFYWVIDWEGMISVSSLVGLLEKHFFPKWLQVLCSWLSNSPNYEEITKWYLGWKSMFSDQVLAHPSIKDKFNEALDIMNRAVSSSVGGYMQPGARENIAYLTHTERRKDFQYEAMQERREAENMAQRGIGMAASSVPMNFKDLIQTKAEEHNIVFMPVIGKRHEGKQLYTFGRIVIYIDRGVVFVQGEKTWVPTSLQSLIDMAK</sequence>
<protein>
    <recommendedName>
        <fullName>Tuftelin-interacting protein 11</fullName>
    </recommendedName>
    <alternativeName>
        <fullName>Septin and tuftelin-interacting protein 1</fullName>
        <shortName>STIP-1</shortName>
    </alternativeName>
</protein>
<organism>
    <name type="scientific">Gallus gallus</name>
    <name type="common">Chicken</name>
    <dbReference type="NCBI Taxonomy" id="9031"/>
    <lineage>
        <taxon>Eukaryota</taxon>
        <taxon>Metazoa</taxon>
        <taxon>Chordata</taxon>
        <taxon>Craniata</taxon>
        <taxon>Vertebrata</taxon>
        <taxon>Euteleostomi</taxon>
        <taxon>Archelosauria</taxon>
        <taxon>Archosauria</taxon>
        <taxon>Dinosauria</taxon>
        <taxon>Saurischia</taxon>
        <taxon>Theropoda</taxon>
        <taxon>Coelurosauria</taxon>
        <taxon>Aves</taxon>
        <taxon>Neognathae</taxon>
        <taxon>Galloanserae</taxon>
        <taxon>Galliformes</taxon>
        <taxon>Phasianidae</taxon>
        <taxon>Phasianinae</taxon>
        <taxon>Gallus</taxon>
    </lineage>
</organism>
<comment type="function">
    <text evidence="1">Involved in pre-mRNA splicing, specifically in spliceosome disassembly during late-stage splicing events.</text>
</comment>
<comment type="subunit">
    <text evidence="1">Identified in the spliceosome C complex.</text>
</comment>
<comment type="subcellular location">
    <subcellularLocation>
        <location evidence="1">Nucleus</location>
    </subcellularLocation>
</comment>
<comment type="similarity">
    <text evidence="4">Belongs to the TFP11/STIP family.</text>
</comment>
<reference key="1">
    <citation type="journal article" date="2005" name="Genome Biol.">
        <title>Full-length cDNAs from chicken bursal lymphocytes to facilitate gene function analysis.</title>
        <authorList>
            <person name="Caldwell R.B."/>
            <person name="Kierzek A.M."/>
            <person name="Arakawa H."/>
            <person name="Bezzubov Y."/>
            <person name="Zaim J."/>
            <person name="Fiedler P."/>
            <person name="Kutter S."/>
            <person name="Blagodatski A."/>
            <person name="Kostovska D."/>
            <person name="Koter M."/>
            <person name="Plachy J."/>
            <person name="Carninci P."/>
            <person name="Hayashizaki Y."/>
            <person name="Buerstedde J.-M."/>
        </authorList>
    </citation>
    <scope>NUCLEOTIDE SEQUENCE [LARGE SCALE MRNA]</scope>
    <source>
        <strain>CB</strain>
        <tissue>Bursa of Fabricius</tissue>
    </source>
</reference>